<organism>
    <name type="scientific">Yersinia pseudotuberculosis serotype I (strain IP32953)</name>
    <dbReference type="NCBI Taxonomy" id="273123"/>
    <lineage>
        <taxon>Bacteria</taxon>
        <taxon>Pseudomonadati</taxon>
        <taxon>Pseudomonadota</taxon>
        <taxon>Gammaproteobacteria</taxon>
        <taxon>Enterobacterales</taxon>
        <taxon>Yersiniaceae</taxon>
        <taxon>Yersinia</taxon>
    </lineage>
</organism>
<protein>
    <recommendedName>
        <fullName evidence="1">Siroheme synthase 1</fullName>
    </recommendedName>
    <domain>
        <recommendedName>
            <fullName evidence="1">Uroporphyrinogen-III C-methyltransferase 1</fullName>
            <shortName evidence="1">Urogen III methylase 1</shortName>
            <ecNumber evidence="1">2.1.1.107</ecNumber>
        </recommendedName>
        <alternativeName>
            <fullName evidence="1">SUMT 1</fullName>
        </alternativeName>
        <alternativeName>
            <fullName evidence="1">Uroporphyrinogen III methylase 1</fullName>
            <shortName evidence="1">UROM 1</shortName>
        </alternativeName>
    </domain>
    <domain>
        <recommendedName>
            <fullName evidence="1">Precorrin-2 dehydrogenase 1</fullName>
            <ecNumber evidence="1">1.3.1.76</ecNumber>
        </recommendedName>
    </domain>
    <domain>
        <recommendedName>
            <fullName evidence="1">Sirohydrochlorin ferrochelatase 1</fullName>
            <ecNumber evidence="1">4.99.1.4</ecNumber>
        </recommendedName>
    </domain>
</protein>
<evidence type="ECO:0000255" key="1">
    <source>
        <dbReference type="HAMAP-Rule" id="MF_01646"/>
    </source>
</evidence>
<proteinExistence type="inferred from homology"/>
<keyword id="KW-0169">Cobalamin biosynthesis</keyword>
<keyword id="KW-0456">Lyase</keyword>
<keyword id="KW-0489">Methyltransferase</keyword>
<keyword id="KW-0511">Multifunctional enzyme</keyword>
<keyword id="KW-0520">NAD</keyword>
<keyword id="KW-0560">Oxidoreductase</keyword>
<keyword id="KW-0597">Phosphoprotein</keyword>
<keyword id="KW-0627">Porphyrin biosynthesis</keyword>
<keyword id="KW-0949">S-adenosyl-L-methionine</keyword>
<keyword id="KW-0808">Transferase</keyword>
<dbReference type="EC" id="2.1.1.107" evidence="1"/>
<dbReference type="EC" id="1.3.1.76" evidence="1"/>
<dbReference type="EC" id="4.99.1.4" evidence="1"/>
<dbReference type="EMBL" id="BX936398">
    <property type="protein sequence ID" value="CAH20004.1"/>
    <property type="molecule type" value="Genomic_DNA"/>
</dbReference>
<dbReference type="RefSeq" id="WP_011191775.1">
    <property type="nucleotide sequence ID" value="NC_006155.1"/>
</dbReference>
<dbReference type="SMR" id="Q66EC9"/>
<dbReference type="KEGG" id="ypo:BZ17_1792"/>
<dbReference type="KEGG" id="yps:YPTB0764"/>
<dbReference type="PATRIC" id="fig|273123.14.peg.1897"/>
<dbReference type="UniPathway" id="UPA00148">
    <property type="reaction ID" value="UER00211"/>
</dbReference>
<dbReference type="UniPathway" id="UPA00148">
    <property type="reaction ID" value="UER00222"/>
</dbReference>
<dbReference type="UniPathway" id="UPA00262">
    <property type="reaction ID" value="UER00211"/>
</dbReference>
<dbReference type="UniPathway" id="UPA00262">
    <property type="reaction ID" value="UER00222"/>
</dbReference>
<dbReference type="UniPathway" id="UPA00262">
    <property type="reaction ID" value="UER00376"/>
</dbReference>
<dbReference type="Proteomes" id="UP000001011">
    <property type="component" value="Chromosome"/>
</dbReference>
<dbReference type="GO" id="GO:0051287">
    <property type="term" value="F:NAD binding"/>
    <property type="evidence" value="ECO:0007669"/>
    <property type="project" value="InterPro"/>
</dbReference>
<dbReference type="GO" id="GO:0043115">
    <property type="term" value="F:precorrin-2 dehydrogenase activity"/>
    <property type="evidence" value="ECO:0007669"/>
    <property type="project" value="UniProtKB-UniRule"/>
</dbReference>
<dbReference type="GO" id="GO:0051266">
    <property type="term" value="F:sirohydrochlorin ferrochelatase activity"/>
    <property type="evidence" value="ECO:0007669"/>
    <property type="project" value="UniProtKB-EC"/>
</dbReference>
<dbReference type="GO" id="GO:0004851">
    <property type="term" value="F:uroporphyrin-III C-methyltransferase activity"/>
    <property type="evidence" value="ECO:0007669"/>
    <property type="project" value="UniProtKB-UniRule"/>
</dbReference>
<dbReference type="GO" id="GO:0009236">
    <property type="term" value="P:cobalamin biosynthetic process"/>
    <property type="evidence" value="ECO:0007669"/>
    <property type="project" value="UniProtKB-UniRule"/>
</dbReference>
<dbReference type="GO" id="GO:0032259">
    <property type="term" value="P:methylation"/>
    <property type="evidence" value="ECO:0007669"/>
    <property type="project" value="UniProtKB-KW"/>
</dbReference>
<dbReference type="GO" id="GO:0019354">
    <property type="term" value="P:siroheme biosynthetic process"/>
    <property type="evidence" value="ECO:0007669"/>
    <property type="project" value="UniProtKB-UniRule"/>
</dbReference>
<dbReference type="CDD" id="cd11642">
    <property type="entry name" value="SUMT"/>
    <property type="match status" value="1"/>
</dbReference>
<dbReference type="FunFam" id="3.30.160.110:FF:000001">
    <property type="entry name" value="Siroheme synthase"/>
    <property type="match status" value="1"/>
</dbReference>
<dbReference type="FunFam" id="3.30.950.10:FF:000001">
    <property type="entry name" value="Siroheme synthase"/>
    <property type="match status" value="1"/>
</dbReference>
<dbReference type="FunFam" id="3.40.1010.10:FF:000001">
    <property type="entry name" value="Siroheme synthase"/>
    <property type="match status" value="1"/>
</dbReference>
<dbReference type="Gene3D" id="3.40.1010.10">
    <property type="entry name" value="Cobalt-precorrin-4 Transmethylase, Domain 1"/>
    <property type="match status" value="1"/>
</dbReference>
<dbReference type="Gene3D" id="3.30.950.10">
    <property type="entry name" value="Methyltransferase, Cobalt-precorrin-4 Transmethylase, Domain 2"/>
    <property type="match status" value="1"/>
</dbReference>
<dbReference type="Gene3D" id="3.40.50.720">
    <property type="entry name" value="NAD(P)-binding Rossmann-like Domain"/>
    <property type="match status" value="1"/>
</dbReference>
<dbReference type="Gene3D" id="1.10.8.210">
    <property type="entry name" value="Sirohaem synthase, dimerisation domain"/>
    <property type="match status" value="1"/>
</dbReference>
<dbReference type="Gene3D" id="3.30.160.110">
    <property type="entry name" value="Siroheme synthase, domain 2"/>
    <property type="match status" value="1"/>
</dbReference>
<dbReference type="HAMAP" id="MF_01646">
    <property type="entry name" value="Siroheme_synth"/>
    <property type="match status" value="1"/>
</dbReference>
<dbReference type="InterPro" id="IPR000878">
    <property type="entry name" value="4pyrrol_Mease"/>
</dbReference>
<dbReference type="InterPro" id="IPR035996">
    <property type="entry name" value="4pyrrol_Methylase_sf"/>
</dbReference>
<dbReference type="InterPro" id="IPR014777">
    <property type="entry name" value="4pyrrole_Mease_sub1"/>
</dbReference>
<dbReference type="InterPro" id="IPR014776">
    <property type="entry name" value="4pyrrole_Mease_sub2"/>
</dbReference>
<dbReference type="InterPro" id="IPR006366">
    <property type="entry name" value="CobA/CysG_C"/>
</dbReference>
<dbReference type="InterPro" id="IPR036291">
    <property type="entry name" value="NAD(P)-bd_dom_sf"/>
</dbReference>
<dbReference type="InterPro" id="IPR050161">
    <property type="entry name" value="Siro_Cobalamin_biosynth"/>
</dbReference>
<dbReference type="InterPro" id="IPR037115">
    <property type="entry name" value="Sirohaem_synt_dimer_dom_sf"/>
</dbReference>
<dbReference type="InterPro" id="IPR012409">
    <property type="entry name" value="Sirohaem_synth"/>
</dbReference>
<dbReference type="InterPro" id="IPR028281">
    <property type="entry name" value="Sirohaem_synthase_central"/>
</dbReference>
<dbReference type="InterPro" id="IPR019478">
    <property type="entry name" value="Sirohaem_synthase_dimer_dom"/>
</dbReference>
<dbReference type="InterPro" id="IPR006367">
    <property type="entry name" value="Sirohaem_synthase_N"/>
</dbReference>
<dbReference type="InterPro" id="IPR003043">
    <property type="entry name" value="Uropor_MeTrfase_CS"/>
</dbReference>
<dbReference type="NCBIfam" id="TIGR01469">
    <property type="entry name" value="cobA_cysG_Cterm"/>
    <property type="match status" value="1"/>
</dbReference>
<dbReference type="NCBIfam" id="TIGR01470">
    <property type="entry name" value="cysG_Nterm"/>
    <property type="match status" value="1"/>
</dbReference>
<dbReference type="NCBIfam" id="NF004790">
    <property type="entry name" value="PRK06136.1"/>
    <property type="match status" value="1"/>
</dbReference>
<dbReference type="NCBIfam" id="NF007922">
    <property type="entry name" value="PRK10637.1"/>
    <property type="match status" value="1"/>
</dbReference>
<dbReference type="PANTHER" id="PTHR45790:SF1">
    <property type="entry name" value="SIROHEME SYNTHASE"/>
    <property type="match status" value="1"/>
</dbReference>
<dbReference type="PANTHER" id="PTHR45790">
    <property type="entry name" value="SIROHEME SYNTHASE-RELATED"/>
    <property type="match status" value="1"/>
</dbReference>
<dbReference type="Pfam" id="PF10414">
    <property type="entry name" value="CysG_dimeriser"/>
    <property type="match status" value="1"/>
</dbReference>
<dbReference type="Pfam" id="PF13241">
    <property type="entry name" value="NAD_binding_7"/>
    <property type="match status" value="1"/>
</dbReference>
<dbReference type="Pfam" id="PF14824">
    <property type="entry name" value="Sirohm_synth_M"/>
    <property type="match status" value="1"/>
</dbReference>
<dbReference type="Pfam" id="PF00590">
    <property type="entry name" value="TP_methylase"/>
    <property type="match status" value="1"/>
</dbReference>
<dbReference type="PIRSF" id="PIRSF036426">
    <property type="entry name" value="Sirohaem_synth"/>
    <property type="match status" value="1"/>
</dbReference>
<dbReference type="SUPFAM" id="SSF51735">
    <property type="entry name" value="NAD(P)-binding Rossmann-fold domains"/>
    <property type="match status" value="1"/>
</dbReference>
<dbReference type="SUPFAM" id="SSF75615">
    <property type="entry name" value="Siroheme synthase middle domains-like"/>
    <property type="match status" value="1"/>
</dbReference>
<dbReference type="SUPFAM" id="SSF53790">
    <property type="entry name" value="Tetrapyrrole methylase"/>
    <property type="match status" value="1"/>
</dbReference>
<dbReference type="PROSITE" id="PS00839">
    <property type="entry name" value="SUMT_1"/>
    <property type="match status" value="1"/>
</dbReference>
<dbReference type="PROSITE" id="PS00840">
    <property type="entry name" value="SUMT_2"/>
    <property type="match status" value="1"/>
</dbReference>
<feature type="chain" id="PRO_0000330578" description="Siroheme synthase 1">
    <location>
        <begin position="1"/>
        <end position="472"/>
    </location>
</feature>
<feature type="region of interest" description="Precorrin-2 dehydrogenase /sirohydrochlorin ferrochelatase" evidence="1">
    <location>
        <begin position="1"/>
        <end position="203"/>
    </location>
</feature>
<feature type="region of interest" description="Uroporphyrinogen-III C-methyltransferase" evidence="1">
    <location>
        <begin position="215"/>
        <end position="472"/>
    </location>
</feature>
<feature type="active site" description="Proton acceptor" evidence="1">
    <location>
        <position position="247"/>
    </location>
</feature>
<feature type="active site" description="Proton donor" evidence="1">
    <location>
        <position position="269"/>
    </location>
</feature>
<feature type="binding site" evidence="1">
    <location>
        <begin position="22"/>
        <end position="23"/>
    </location>
    <ligand>
        <name>NAD(+)</name>
        <dbReference type="ChEBI" id="CHEBI:57540"/>
    </ligand>
</feature>
<feature type="binding site" evidence="1">
    <location>
        <begin position="43"/>
        <end position="44"/>
    </location>
    <ligand>
        <name>NAD(+)</name>
        <dbReference type="ChEBI" id="CHEBI:57540"/>
    </ligand>
</feature>
<feature type="binding site" evidence="1">
    <location>
        <position position="224"/>
    </location>
    <ligand>
        <name>S-adenosyl-L-methionine</name>
        <dbReference type="ChEBI" id="CHEBI:59789"/>
    </ligand>
</feature>
<feature type="binding site" evidence="1">
    <location>
        <begin position="300"/>
        <end position="302"/>
    </location>
    <ligand>
        <name>S-adenosyl-L-methionine</name>
        <dbReference type="ChEBI" id="CHEBI:59789"/>
    </ligand>
</feature>
<feature type="binding site" evidence="1">
    <location>
        <position position="305"/>
    </location>
    <ligand>
        <name>S-adenosyl-L-methionine</name>
        <dbReference type="ChEBI" id="CHEBI:59789"/>
    </ligand>
</feature>
<feature type="binding site" evidence="1">
    <location>
        <begin position="330"/>
        <end position="331"/>
    </location>
    <ligand>
        <name>S-adenosyl-L-methionine</name>
        <dbReference type="ChEBI" id="CHEBI:59789"/>
    </ligand>
</feature>
<feature type="binding site" evidence="1">
    <location>
        <position position="382"/>
    </location>
    <ligand>
        <name>S-adenosyl-L-methionine</name>
        <dbReference type="ChEBI" id="CHEBI:59789"/>
    </ligand>
</feature>
<feature type="binding site" evidence="1">
    <location>
        <position position="411"/>
    </location>
    <ligand>
        <name>S-adenosyl-L-methionine</name>
        <dbReference type="ChEBI" id="CHEBI:59789"/>
    </ligand>
</feature>
<feature type="modified residue" description="Phosphoserine" evidence="1">
    <location>
        <position position="128"/>
    </location>
</feature>
<sequence length="472" mass="50874">MDYLPLFADLKQRPVLIVGGGEVAARKIELLHRAGAQVWVVAQTLSSELEQQYQDGRIHWLAQDFLPEQLDNVFLVIAATNDTVLNAAVFAAADQRCILANVVDDQPLCSFIFPSIVDRSPLVVAISSSGQAPVLARILREKLEALLPTRLSDMAAIAGRWRGRVKQHMASMGERRRFWEHAFSGRFASLISRGQLTEAENELQLSLEGQHRALGEVALVGAGPGDAGLLTLRGLQVMQQADVVLYDHLVSPEVLDLVRRDAERICVGKRAGAHSVTQEATNQLLVTLAQQGKRVVRLKGGDPFIFGRGGEELQVVAQAGIPFQVVPGVTAAAGATAYAGIPLTHRDHAQSVTFITGHCRPDGDDLDWQALARGRQTLAIYMGTVKAAAISQQLIAHGRSSTTPVAVIGRGTRVDQQVLIGTLAQLESLAQQAPTPALLVIGEVVNLHHQIAWFGQQPQTESAISPSVVNLA</sequence>
<accession>Q66EC9</accession>
<gene>
    <name evidence="1" type="primary">cysG1</name>
    <name type="ordered locus">YPTB0764</name>
</gene>
<comment type="function">
    <text evidence="1">Multifunctional enzyme that catalyzes the SAM-dependent methylations of uroporphyrinogen III at position C-2 and C-7 to form precorrin-2 via precorrin-1. Then it catalyzes the NAD-dependent ring dehydrogenation of precorrin-2 to yield sirohydrochlorin. Finally, it catalyzes the ferrochelation of sirohydrochlorin to yield siroheme.</text>
</comment>
<comment type="catalytic activity">
    <reaction evidence="1">
        <text>uroporphyrinogen III + 2 S-adenosyl-L-methionine = precorrin-2 + 2 S-adenosyl-L-homocysteine + H(+)</text>
        <dbReference type="Rhea" id="RHEA:32459"/>
        <dbReference type="ChEBI" id="CHEBI:15378"/>
        <dbReference type="ChEBI" id="CHEBI:57308"/>
        <dbReference type="ChEBI" id="CHEBI:57856"/>
        <dbReference type="ChEBI" id="CHEBI:58827"/>
        <dbReference type="ChEBI" id="CHEBI:59789"/>
        <dbReference type="EC" id="2.1.1.107"/>
    </reaction>
</comment>
<comment type="catalytic activity">
    <reaction evidence="1">
        <text>precorrin-2 + NAD(+) = sirohydrochlorin + NADH + 2 H(+)</text>
        <dbReference type="Rhea" id="RHEA:15613"/>
        <dbReference type="ChEBI" id="CHEBI:15378"/>
        <dbReference type="ChEBI" id="CHEBI:57540"/>
        <dbReference type="ChEBI" id="CHEBI:57945"/>
        <dbReference type="ChEBI" id="CHEBI:58351"/>
        <dbReference type="ChEBI" id="CHEBI:58827"/>
        <dbReference type="EC" id="1.3.1.76"/>
    </reaction>
</comment>
<comment type="catalytic activity">
    <reaction evidence="1">
        <text>siroheme + 2 H(+) = sirohydrochlorin + Fe(2+)</text>
        <dbReference type="Rhea" id="RHEA:24360"/>
        <dbReference type="ChEBI" id="CHEBI:15378"/>
        <dbReference type="ChEBI" id="CHEBI:29033"/>
        <dbReference type="ChEBI" id="CHEBI:58351"/>
        <dbReference type="ChEBI" id="CHEBI:60052"/>
        <dbReference type="EC" id="4.99.1.4"/>
    </reaction>
</comment>
<comment type="pathway">
    <text evidence="1">Cofactor biosynthesis; adenosylcobalamin biosynthesis; precorrin-2 from uroporphyrinogen III: step 1/1.</text>
</comment>
<comment type="pathway">
    <text evidence="1">Cofactor biosynthesis; adenosylcobalamin biosynthesis; sirohydrochlorin from precorrin-2: step 1/1.</text>
</comment>
<comment type="pathway">
    <text evidence="1">Porphyrin-containing compound metabolism; siroheme biosynthesis; precorrin-2 from uroporphyrinogen III: step 1/1.</text>
</comment>
<comment type="pathway">
    <text evidence="1">Porphyrin-containing compound metabolism; siroheme biosynthesis; siroheme from sirohydrochlorin: step 1/1.</text>
</comment>
<comment type="pathway">
    <text evidence="1">Porphyrin-containing compound metabolism; siroheme biosynthesis; sirohydrochlorin from precorrin-2: step 1/1.</text>
</comment>
<comment type="similarity">
    <text evidence="1">In the N-terminal section; belongs to the precorrin-2 dehydrogenase / sirohydrochlorin ferrochelatase family.</text>
</comment>
<comment type="similarity">
    <text evidence="1">In the C-terminal section; belongs to the precorrin methyltransferase family.</text>
</comment>
<reference key="1">
    <citation type="journal article" date="2004" name="Proc. Natl. Acad. Sci. U.S.A.">
        <title>Insights into the evolution of Yersinia pestis through whole-genome comparison with Yersinia pseudotuberculosis.</title>
        <authorList>
            <person name="Chain P.S.G."/>
            <person name="Carniel E."/>
            <person name="Larimer F.W."/>
            <person name="Lamerdin J."/>
            <person name="Stoutland P.O."/>
            <person name="Regala W.M."/>
            <person name="Georgescu A.M."/>
            <person name="Vergez L.M."/>
            <person name="Land M.L."/>
            <person name="Motin V.L."/>
            <person name="Brubaker R.R."/>
            <person name="Fowler J."/>
            <person name="Hinnebusch J."/>
            <person name="Marceau M."/>
            <person name="Medigue C."/>
            <person name="Simonet M."/>
            <person name="Chenal-Francisque V."/>
            <person name="Souza B."/>
            <person name="Dacheux D."/>
            <person name="Elliott J.M."/>
            <person name="Derbise A."/>
            <person name="Hauser L.J."/>
            <person name="Garcia E."/>
        </authorList>
    </citation>
    <scope>NUCLEOTIDE SEQUENCE [LARGE SCALE GENOMIC DNA]</scope>
    <source>
        <strain>IP32953</strain>
    </source>
</reference>
<name>CYSG1_YERPS</name>